<protein>
    <recommendedName>
        <fullName evidence="1">Replication factor C small subunit</fullName>
        <shortName evidence="1">RFC small subunit</shortName>
    </recommendedName>
    <alternativeName>
        <fullName evidence="1">Clamp loader small subunit</fullName>
    </alternativeName>
</protein>
<sequence>MQKPWVEKYRPETLPEVVGHHEIIKRLTNYVEKKSMPHLLFSGSPGVGKTTAALALAKDLYGETWRENFLELNSSDERGIDVIRTKVKDFARTKPIGDAPFKVIFLDESDALTSDAQNALRRTMEKYSDICRFILSCNYPSKIIPPIQSRCAIFRFSPLKTEDLVENLKDISEKETLTLEKGGIDAIIYVSEGDMRKAINVLQTAAAVSDTVTEEIVYKVASKARPDEIKKMTHLALNGKFVEAKEQLYNLMIDWGMSGEDILIQVFREVPNLDISEKEKVHLVEAIGECDFRIVEGSNERIQLSALLAKMGILE</sequence>
<organism>
    <name type="scientific">Methanococcus maripaludis (strain C5 / ATCC BAA-1333)</name>
    <dbReference type="NCBI Taxonomy" id="402880"/>
    <lineage>
        <taxon>Archaea</taxon>
        <taxon>Methanobacteriati</taxon>
        <taxon>Methanobacteriota</taxon>
        <taxon>Methanomada group</taxon>
        <taxon>Methanococci</taxon>
        <taxon>Methanococcales</taxon>
        <taxon>Methanococcaceae</taxon>
        <taxon>Methanococcus</taxon>
    </lineage>
</organism>
<reference key="1">
    <citation type="submission" date="2007-03" db="EMBL/GenBank/DDBJ databases">
        <title>Complete sequence of chromosome of Methanococcus maripaludis C5.</title>
        <authorList>
            <consortium name="US DOE Joint Genome Institute"/>
            <person name="Copeland A."/>
            <person name="Lucas S."/>
            <person name="Lapidus A."/>
            <person name="Barry K."/>
            <person name="Glavina del Rio T."/>
            <person name="Dalin E."/>
            <person name="Tice H."/>
            <person name="Pitluck S."/>
            <person name="Chertkov O."/>
            <person name="Brettin T."/>
            <person name="Bruce D."/>
            <person name="Han C."/>
            <person name="Detter J.C."/>
            <person name="Schmutz J."/>
            <person name="Larimer F."/>
            <person name="Land M."/>
            <person name="Hauser L."/>
            <person name="Kyrpides N."/>
            <person name="Mikhailova N."/>
            <person name="Sieprawska-Lupa M."/>
            <person name="Whitman W.B."/>
            <person name="Richardson P."/>
        </authorList>
    </citation>
    <scope>NUCLEOTIDE SEQUENCE [LARGE SCALE GENOMIC DNA]</scope>
    <source>
        <strain>C5 / ATCC BAA-1333</strain>
    </source>
</reference>
<keyword id="KW-0067">ATP-binding</keyword>
<keyword id="KW-0235">DNA replication</keyword>
<keyword id="KW-0547">Nucleotide-binding</keyword>
<name>RFCS_METM5</name>
<gene>
    <name evidence="1" type="primary">rfcS</name>
    <name type="ordered locus">MmarC5_1210</name>
</gene>
<accession>A4FZ74</accession>
<dbReference type="EMBL" id="CP000609">
    <property type="protein sequence ID" value="ABO35508.1"/>
    <property type="molecule type" value="Genomic_DNA"/>
</dbReference>
<dbReference type="RefSeq" id="WP_011868961.1">
    <property type="nucleotide sequence ID" value="NC_009135.1"/>
</dbReference>
<dbReference type="SMR" id="A4FZ74"/>
<dbReference type="STRING" id="402880.MmarC5_1210"/>
<dbReference type="GeneID" id="4928951"/>
<dbReference type="KEGG" id="mmq:MmarC5_1210"/>
<dbReference type="eggNOG" id="arCOG00469">
    <property type="taxonomic scope" value="Archaea"/>
</dbReference>
<dbReference type="HOGENOM" id="CLU_042324_2_1_2"/>
<dbReference type="OrthoDB" id="7928at2157"/>
<dbReference type="Proteomes" id="UP000000253">
    <property type="component" value="Chromosome"/>
</dbReference>
<dbReference type="GO" id="GO:0005663">
    <property type="term" value="C:DNA replication factor C complex"/>
    <property type="evidence" value="ECO:0007669"/>
    <property type="project" value="InterPro"/>
</dbReference>
<dbReference type="GO" id="GO:0005524">
    <property type="term" value="F:ATP binding"/>
    <property type="evidence" value="ECO:0007669"/>
    <property type="project" value="UniProtKB-UniRule"/>
</dbReference>
<dbReference type="GO" id="GO:0016887">
    <property type="term" value="F:ATP hydrolysis activity"/>
    <property type="evidence" value="ECO:0007669"/>
    <property type="project" value="InterPro"/>
</dbReference>
<dbReference type="GO" id="GO:0003677">
    <property type="term" value="F:DNA binding"/>
    <property type="evidence" value="ECO:0007669"/>
    <property type="project" value="InterPro"/>
</dbReference>
<dbReference type="GO" id="GO:0003689">
    <property type="term" value="F:DNA clamp loader activity"/>
    <property type="evidence" value="ECO:0007669"/>
    <property type="project" value="UniProtKB-UniRule"/>
</dbReference>
<dbReference type="GO" id="GO:0006281">
    <property type="term" value="P:DNA repair"/>
    <property type="evidence" value="ECO:0007669"/>
    <property type="project" value="TreeGrafter"/>
</dbReference>
<dbReference type="GO" id="GO:0006261">
    <property type="term" value="P:DNA-templated DNA replication"/>
    <property type="evidence" value="ECO:0007669"/>
    <property type="project" value="TreeGrafter"/>
</dbReference>
<dbReference type="CDD" id="cd00009">
    <property type="entry name" value="AAA"/>
    <property type="match status" value="1"/>
</dbReference>
<dbReference type="CDD" id="cd18140">
    <property type="entry name" value="HLD_clamp_RFC"/>
    <property type="match status" value="1"/>
</dbReference>
<dbReference type="FunFam" id="1.20.272.10:FF:000029">
    <property type="entry name" value="Replication factor C small subunit"/>
    <property type="match status" value="1"/>
</dbReference>
<dbReference type="FunFam" id="3.40.50.300:FF:000129">
    <property type="entry name" value="Replication factor C subunit 5"/>
    <property type="match status" value="1"/>
</dbReference>
<dbReference type="Gene3D" id="1.10.8.60">
    <property type="match status" value="1"/>
</dbReference>
<dbReference type="Gene3D" id="1.20.272.10">
    <property type="match status" value="1"/>
</dbReference>
<dbReference type="Gene3D" id="3.40.50.300">
    <property type="entry name" value="P-loop containing nucleotide triphosphate hydrolases"/>
    <property type="match status" value="1"/>
</dbReference>
<dbReference type="HAMAP" id="MF_01509">
    <property type="entry name" value="RfcS"/>
    <property type="match status" value="1"/>
</dbReference>
<dbReference type="InterPro" id="IPR003593">
    <property type="entry name" value="AAA+_ATPase"/>
</dbReference>
<dbReference type="InterPro" id="IPR003959">
    <property type="entry name" value="ATPase_AAA_core"/>
</dbReference>
<dbReference type="InterPro" id="IPR008921">
    <property type="entry name" value="DNA_pol3_clamp-load_cplx_C"/>
</dbReference>
<dbReference type="InterPro" id="IPR050238">
    <property type="entry name" value="DNA_Rep/Repair_Clamp_Loader"/>
</dbReference>
<dbReference type="InterPro" id="IPR027417">
    <property type="entry name" value="P-loop_NTPase"/>
</dbReference>
<dbReference type="InterPro" id="IPR023748">
    <property type="entry name" value="Rep_factor-C_ssu_arc"/>
</dbReference>
<dbReference type="InterPro" id="IPR013748">
    <property type="entry name" value="Rep_factorC_C"/>
</dbReference>
<dbReference type="InterPro" id="IPR047854">
    <property type="entry name" value="RFC_lid"/>
</dbReference>
<dbReference type="NCBIfam" id="NF001679">
    <property type="entry name" value="PRK00440.1"/>
    <property type="match status" value="1"/>
</dbReference>
<dbReference type="PANTHER" id="PTHR11669">
    <property type="entry name" value="REPLICATION FACTOR C / DNA POLYMERASE III GAMMA-TAU SUBUNIT"/>
    <property type="match status" value="1"/>
</dbReference>
<dbReference type="PANTHER" id="PTHR11669:SF20">
    <property type="entry name" value="REPLICATION FACTOR C SUBUNIT 4"/>
    <property type="match status" value="1"/>
</dbReference>
<dbReference type="Pfam" id="PF00004">
    <property type="entry name" value="AAA"/>
    <property type="match status" value="1"/>
</dbReference>
<dbReference type="Pfam" id="PF21960">
    <property type="entry name" value="RCF1-5-like_lid"/>
    <property type="match status" value="1"/>
</dbReference>
<dbReference type="Pfam" id="PF08542">
    <property type="entry name" value="Rep_fac_C"/>
    <property type="match status" value="1"/>
</dbReference>
<dbReference type="SMART" id="SM00382">
    <property type="entry name" value="AAA"/>
    <property type="match status" value="1"/>
</dbReference>
<dbReference type="SUPFAM" id="SSF52540">
    <property type="entry name" value="P-loop containing nucleoside triphosphate hydrolases"/>
    <property type="match status" value="1"/>
</dbReference>
<dbReference type="SUPFAM" id="SSF48019">
    <property type="entry name" value="post-AAA+ oligomerization domain-like"/>
    <property type="match status" value="1"/>
</dbReference>
<comment type="function">
    <text evidence="1">Part of the RFC clamp loader complex which loads the PCNA sliding clamp onto DNA.</text>
</comment>
<comment type="subunit">
    <text evidence="1">Heteromultimer composed of small subunits (RfcS) and large subunits (RfcL).</text>
</comment>
<comment type="similarity">
    <text evidence="1">Belongs to the activator 1 small subunits family. RfcS subfamily.</text>
</comment>
<proteinExistence type="inferred from homology"/>
<evidence type="ECO:0000255" key="1">
    <source>
        <dbReference type="HAMAP-Rule" id="MF_01509"/>
    </source>
</evidence>
<feature type="chain" id="PRO_1000024487" description="Replication factor C small subunit">
    <location>
        <begin position="1"/>
        <end position="315"/>
    </location>
</feature>
<feature type="binding site" evidence="1">
    <location>
        <begin position="43"/>
        <end position="50"/>
    </location>
    <ligand>
        <name>ATP</name>
        <dbReference type="ChEBI" id="CHEBI:30616"/>
    </ligand>
</feature>